<accession>Q72DH2</accession>
<dbReference type="EMBL" id="AE017285">
    <property type="protein sequence ID" value="AAS95437.1"/>
    <property type="molecule type" value="Genomic_DNA"/>
</dbReference>
<dbReference type="RefSeq" id="WP_010938256.1">
    <property type="nucleotide sequence ID" value="NC_002937.3"/>
</dbReference>
<dbReference type="RefSeq" id="YP_010178.1">
    <property type="nucleotide sequence ID" value="NC_002937.3"/>
</dbReference>
<dbReference type="SMR" id="Q72DH2"/>
<dbReference type="STRING" id="882.DVU_0957"/>
<dbReference type="PaxDb" id="882-DVU_0957"/>
<dbReference type="EnsemblBacteria" id="AAS95437">
    <property type="protein sequence ID" value="AAS95437"/>
    <property type="gene ID" value="DVU_0957"/>
</dbReference>
<dbReference type="KEGG" id="dvu:DVU_0957"/>
<dbReference type="PATRIC" id="fig|882.5.peg.901"/>
<dbReference type="eggNOG" id="COG0238">
    <property type="taxonomic scope" value="Bacteria"/>
</dbReference>
<dbReference type="HOGENOM" id="CLU_148710_2_2_7"/>
<dbReference type="OrthoDB" id="9812008at2"/>
<dbReference type="PhylomeDB" id="Q72DH2"/>
<dbReference type="Proteomes" id="UP000002194">
    <property type="component" value="Chromosome"/>
</dbReference>
<dbReference type="GO" id="GO:0022627">
    <property type="term" value="C:cytosolic small ribosomal subunit"/>
    <property type="evidence" value="ECO:0007669"/>
    <property type="project" value="TreeGrafter"/>
</dbReference>
<dbReference type="GO" id="GO:0070181">
    <property type="term" value="F:small ribosomal subunit rRNA binding"/>
    <property type="evidence" value="ECO:0007669"/>
    <property type="project" value="TreeGrafter"/>
</dbReference>
<dbReference type="GO" id="GO:0003735">
    <property type="term" value="F:structural constituent of ribosome"/>
    <property type="evidence" value="ECO:0007669"/>
    <property type="project" value="InterPro"/>
</dbReference>
<dbReference type="GO" id="GO:0006412">
    <property type="term" value="P:translation"/>
    <property type="evidence" value="ECO:0007669"/>
    <property type="project" value="UniProtKB-UniRule"/>
</dbReference>
<dbReference type="Gene3D" id="4.10.640.10">
    <property type="entry name" value="Ribosomal protein S18"/>
    <property type="match status" value="1"/>
</dbReference>
<dbReference type="HAMAP" id="MF_00270">
    <property type="entry name" value="Ribosomal_bS18"/>
    <property type="match status" value="1"/>
</dbReference>
<dbReference type="InterPro" id="IPR001648">
    <property type="entry name" value="Ribosomal_bS18"/>
</dbReference>
<dbReference type="InterPro" id="IPR036870">
    <property type="entry name" value="Ribosomal_bS18_sf"/>
</dbReference>
<dbReference type="NCBIfam" id="TIGR00165">
    <property type="entry name" value="S18"/>
    <property type="match status" value="1"/>
</dbReference>
<dbReference type="PANTHER" id="PTHR13479">
    <property type="entry name" value="30S RIBOSOMAL PROTEIN S18"/>
    <property type="match status" value="1"/>
</dbReference>
<dbReference type="PANTHER" id="PTHR13479:SF40">
    <property type="entry name" value="SMALL RIBOSOMAL SUBUNIT PROTEIN BS18M"/>
    <property type="match status" value="1"/>
</dbReference>
<dbReference type="Pfam" id="PF01084">
    <property type="entry name" value="Ribosomal_S18"/>
    <property type="match status" value="1"/>
</dbReference>
<dbReference type="PRINTS" id="PR00974">
    <property type="entry name" value="RIBOSOMALS18"/>
</dbReference>
<dbReference type="SUPFAM" id="SSF46911">
    <property type="entry name" value="Ribosomal protein S18"/>
    <property type="match status" value="1"/>
</dbReference>
<protein>
    <recommendedName>
        <fullName evidence="1">Small ribosomal subunit protein bS18</fullName>
    </recommendedName>
    <alternativeName>
        <fullName evidence="2">30S ribosomal protein S18</fullName>
    </alternativeName>
</protein>
<name>RS18_NITV2</name>
<proteinExistence type="inferred from homology"/>
<keyword id="KW-1185">Reference proteome</keyword>
<keyword id="KW-0687">Ribonucleoprotein</keyword>
<keyword id="KW-0689">Ribosomal protein</keyword>
<keyword id="KW-0694">RNA-binding</keyword>
<keyword id="KW-0699">rRNA-binding</keyword>
<comment type="function">
    <text evidence="1">Binds as a heterodimer with protein bS6 to the central domain of the 16S rRNA, where it helps stabilize the platform of the 30S subunit.</text>
</comment>
<comment type="subunit">
    <text evidence="1">Part of the 30S ribosomal subunit. Forms a tight heterodimer with protein bS6.</text>
</comment>
<comment type="similarity">
    <text evidence="1">Belongs to the bacterial ribosomal protein bS18 family.</text>
</comment>
<reference key="1">
    <citation type="journal article" date="2004" name="Nat. Biotechnol.">
        <title>The genome sequence of the anaerobic, sulfate-reducing bacterium Desulfovibrio vulgaris Hildenborough.</title>
        <authorList>
            <person name="Heidelberg J.F."/>
            <person name="Seshadri R."/>
            <person name="Haveman S.A."/>
            <person name="Hemme C.L."/>
            <person name="Paulsen I.T."/>
            <person name="Kolonay J.F."/>
            <person name="Eisen J.A."/>
            <person name="Ward N.L."/>
            <person name="Methe B.A."/>
            <person name="Brinkac L.M."/>
            <person name="Daugherty S.C."/>
            <person name="DeBoy R.T."/>
            <person name="Dodson R.J."/>
            <person name="Durkin A.S."/>
            <person name="Madupu R."/>
            <person name="Nelson W.C."/>
            <person name="Sullivan S.A."/>
            <person name="Fouts D.E."/>
            <person name="Haft D.H."/>
            <person name="Selengut J."/>
            <person name="Peterson J.D."/>
            <person name="Davidsen T.M."/>
            <person name="Zafar N."/>
            <person name="Zhou L."/>
            <person name="Radune D."/>
            <person name="Dimitrov G."/>
            <person name="Hance M."/>
            <person name="Tran K."/>
            <person name="Khouri H.M."/>
            <person name="Gill J."/>
            <person name="Utterback T.R."/>
            <person name="Feldblyum T.V."/>
            <person name="Wall J.D."/>
            <person name="Voordouw G."/>
            <person name="Fraser C.M."/>
        </authorList>
    </citation>
    <scope>NUCLEOTIDE SEQUENCE [LARGE SCALE GENOMIC DNA]</scope>
    <source>
        <strain>ATCC 29579 / DSM 644 / CCUG 34227 / NCIMB 8303 / VKM B-1760 / Hildenborough</strain>
    </source>
</reference>
<evidence type="ECO:0000255" key="1">
    <source>
        <dbReference type="HAMAP-Rule" id="MF_00270"/>
    </source>
</evidence>
<evidence type="ECO:0000305" key="2"/>
<gene>
    <name evidence="1" type="primary">rpsR</name>
    <name type="ordered locus">DVU_0957</name>
</gene>
<organism>
    <name type="scientific">Nitratidesulfovibrio vulgaris (strain ATCC 29579 / DSM 644 / CCUG 34227 / NCIMB 8303 / VKM B-1760 / Hildenborough)</name>
    <name type="common">Desulfovibrio vulgaris</name>
    <dbReference type="NCBI Taxonomy" id="882"/>
    <lineage>
        <taxon>Bacteria</taxon>
        <taxon>Pseudomonadati</taxon>
        <taxon>Thermodesulfobacteriota</taxon>
        <taxon>Desulfovibrionia</taxon>
        <taxon>Desulfovibrionales</taxon>
        <taxon>Desulfovibrionaceae</taxon>
        <taxon>Nitratidesulfovibrio</taxon>
    </lineage>
</organism>
<sequence>MAFKKKFAPRRKFCRFCADKELPIDYKRADILRDFITERGKIIARRITGTCAHHQRVLTREIKRARQMALLIYTATHSSDVKKKSIL</sequence>
<feature type="chain" id="PRO_0000111152" description="Small ribosomal subunit protein bS18">
    <location>
        <begin position="1"/>
        <end position="87"/>
    </location>
</feature>